<protein>
    <recommendedName>
        <fullName evidence="9">Insulin-like growth factor 1.S</fullName>
    </recommendedName>
    <alternativeName>
        <fullName>Insulin-like growth factor 1-A</fullName>
    </alternativeName>
    <alternativeName>
        <fullName>Insulin-like growth factor I-A</fullName>
        <shortName evidence="8">IGF-I'</shortName>
        <shortName>IGF-IA</shortName>
        <shortName>xIGF-1</shortName>
    </alternativeName>
    <alternativeName>
        <fullName>Somatomedin</fullName>
    </alternativeName>
</protein>
<gene>
    <name evidence="9" type="primary">igf1.S</name>
    <name type="synonym">igf1-a</name>
</gene>
<reference key="1">
    <citation type="journal article" date="1990" name="Mol. Endocrinol.">
        <title>Evolution of insulin-like growth factor I (IGF-I): structure and expression of an IGF-I precursor from Xenopus laevis.</title>
        <authorList>
            <person name="Kajimoto Y."/>
            <person name="Rotwein P."/>
        </authorList>
    </citation>
    <scope>NUCLEOTIDE SEQUENCE [MRNA]</scope>
    <scope>TISSUE SPECIFICITY</scope>
    <source>
        <tissue>Liver</tissue>
    </source>
</reference>
<reference key="2">
    <citation type="journal article" date="1990" name="Biochem. Biophys. Res. Commun.">
        <title>Evidence that Xenopus laevis contains two different nonallelic insulin-like growth factor-I genes.</title>
        <authorList>
            <person name="Shuldiner A.R."/>
            <person name="Nirula A."/>
            <person name="Scott L.A."/>
            <person name="Roth J."/>
        </authorList>
    </citation>
    <scope>NUCLEOTIDE SEQUENCE [GENOMIC DNA] OF 82-125</scope>
    <scope>TISSUE SPECIFICITY</scope>
</reference>
<reference key="3">
    <citation type="journal article" date="2001" name="Dev. Cell">
        <title>Neural and head induction by insulin-like growth factor signals.</title>
        <authorList>
            <person name="Pera E.M."/>
            <person name="Wessely O."/>
            <person name="Li S.-Y."/>
            <person name="De Robertis E.M."/>
        </authorList>
    </citation>
    <scope>FUNCTION</scope>
    <scope>DEVELOPMENTAL STAGE</scope>
</reference>
<reference key="4">
    <citation type="journal article" date="2002" name="Dev. Biol.">
        <title>The IGF pathway regulates head formation by inhibiting Wnt signaling in Xenopus.</title>
        <authorList>
            <person name="Richard-Parpaillon L."/>
            <person name="Heligon C."/>
            <person name="Chesnel F."/>
            <person name="Boujard D."/>
            <person name="Philpott A."/>
        </authorList>
    </citation>
    <scope>FUNCTION</scope>
    <scope>DEVELOPMENTAL STAGE</scope>
</reference>
<accession>P16501</accession>
<sequence>METNNNLSTQLFKCYFCDILKLKMHKMSCIHLLYLVLCFLTLTHSAAAGPETLCGAELVDTLQFVCGDRGFYFSKPTGYGSNNRRSHHRGIVDECCFQSCDFRRLEMYCAPAKQAKSARSVRTQRHTDMPKAQKEVHPKNTSRGNTGSRGFRM</sequence>
<name>IGF1A_XENLA</name>
<dbReference type="EMBL" id="M29857">
    <property type="protein sequence ID" value="AAA70330.1"/>
    <property type="molecule type" value="mRNA"/>
</dbReference>
<dbReference type="PIR" id="A34049">
    <property type="entry name" value="A34049"/>
</dbReference>
<dbReference type="PIR" id="A36079">
    <property type="entry name" value="A36079"/>
</dbReference>
<dbReference type="RefSeq" id="NP_001156865.1">
    <property type="nucleotide sequence ID" value="NM_001163393.1"/>
</dbReference>
<dbReference type="SMR" id="P16501"/>
<dbReference type="GeneID" id="378699"/>
<dbReference type="KEGG" id="xla:108712492"/>
<dbReference type="CTD" id="378699"/>
<dbReference type="OMA" id="WTSAMCC"/>
<dbReference type="OrthoDB" id="8936076at2759"/>
<dbReference type="Proteomes" id="UP000186698">
    <property type="component" value="Chromosome 3S"/>
</dbReference>
<dbReference type="Bgee" id="108712492">
    <property type="expression patterns" value="Expressed in liver and 4 other cell types or tissues"/>
</dbReference>
<dbReference type="GO" id="GO:0005576">
    <property type="term" value="C:extracellular region"/>
    <property type="evidence" value="ECO:0000303"/>
    <property type="project" value="UniProtKB"/>
</dbReference>
<dbReference type="GO" id="GO:0005615">
    <property type="term" value="C:extracellular space"/>
    <property type="evidence" value="ECO:0000318"/>
    <property type="project" value="GO_Central"/>
</dbReference>
<dbReference type="GO" id="GO:0008083">
    <property type="term" value="F:growth factor activity"/>
    <property type="evidence" value="ECO:0000314"/>
    <property type="project" value="UniProtKB"/>
</dbReference>
<dbReference type="GO" id="GO:0005179">
    <property type="term" value="F:hormone activity"/>
    <property type="evidence" value="ECO:0000318"/>
    <property type="project" value="GO_Central"/>
</dbReference>
<dbReference type="GO" id="GO:0005159">
    <property type="term" value="F:insulin-like growth factor receptor binding"/>
    <property type="evidence" value="ECO:0000318"/>
    <property type="project" value="GO_Central"/>
</dbReference>
<dbReference type="GO" id="GO:0008283">
    <property type="term" value="P:cell population proliferation"/>
    <property type="evidence" value="ECO:0000318"/>
    <property type="project" value="GO_Central"/>
</dbReference>
<dbReference type="GO" id="GO:0060323">
    <property type="term" value="P:head morphogenesis"/>
    <property type="evidence" value="ECO:0000314"/>
    <property type="project" value="UniProtKB"/>
</dbReference>
<dbReference type="GO" id="GO:0048009">
    <property type="term" value="P:insulin-like growth factor receptor signaling pathway"/>
    <property type="evidence" value="ECO:0000318"/>
    <property type="project" value="GO_Central"/>
</dbReference>
<dbReference type="GO" id="GO:0043066">
    <property type="term" value="P:negative regulation of apoptotic process"/>
    <property type="evidence" value="ECO:0000250"/>
    <property type="project" value="UniProtKB"/>
</dbReference>
<dbReference type="GO" id="GO:0090201">
    <property type="term" value="P:negative regulation of release of cytochrome c from mitochondria"/>
    <property type="evidence" value="ECO:0000250"/>
    <property type="project" value="UniProtKB"/>
</dbReference>
<dbReference type="GO" id="GO:0030178">
    <property type="term" value="P:negative regulation of Wnt signaling pathway"/>
    <property type="evidence" value="ECO:0000314"/>
    <property type="project" value="UniProtKB"/>
</dbReference>
<dbReference type="GO" id="GO:0008284">
    <property type="term" value="P:positive regulation of cell population proliferation"/>
    <property type="evidence" value="ECO:0000318"/>
    <property type="project" value="GO_Central"/>
</dbReference>
<dbReference type="GO" id="GO:0051897">
    <property type="term" value="P:positive regulation of phosphatidylinositol 3-kinase/protein kinase B signal transduction"/>
    <property type="evidence" value="ECO:0000318"/>
    <property type="project" value="GO_Central"/>
</dbReference>
<dbReference type="CDD" id="cd04368">
    <property type="entry name" value="IlGF"/>
    <property type="match status" value="1"/>
</dbReference>
<dbReference type="FunFam" id="1.10.100.10:FF:000001">
    <property type="entry name" value="insulin-like growth factor I isoform X1"/>
    <property type="match status" value="1"/>
</dbReference>
<dbReference type="Gene3D" id="1.10.100.10">
    <property type="entry name" value="Insulin-like"/>
    <property type="match status" value="1"/>
</dbReference>
<dbReference type="InterPro" id="IPR022341">
    <property type="entry name" value="IGF-I"/>
</dbReference>
<dbReference type="InterPro" id="IPR016179">
    <property type="entry name" value="Insulin-like"/>
</dbReference>
<dbReference type="InterPro" id="IPR022350">
    <property type="entry name" value="Insulin-like_growth_factor"/>
</dbReference>
<dbReference type="InterPro" id="IPR036438">
    <property type="entry name" value="Insulin-like_sf"/>
</dbReference>
<dbReference type="InterPro" id="IPR022353">
    <property type="entry name" value="Insulin_CS"/>
</dbReference>
<dbReference type="InterPro" id="IPR022352">
    <property type="entry name" value="Insulin_family"/>
</dbReference>
<dbReference type="PANTHER" id="PTHR46845">
    <property type="entry name" value="INSULIN-LIKE GROWTH FACTOR I"/>
    <property type="match status" value="1"/>
</dbReference>
<dbReference type="PANTHER" id="PTHR46845:SF1">
    <property type="entry name" value="INSULIN-LIKE GROWTH FACTOR I"/>
    <property type="match status" value="1"/>
</dbReference>
<dbReference type="Pfam" id="PF00049">
    <property type="entry name" value="Insulin"/>
    <property type="match status" value="1"/>
</dbReference>
<dbReference type="PRINTS" id="PR02002">
    <property type="entry name" value="INSLNLIKEGF"/>
</dbReference>
<dbReference type="PRINTS" id="PR02005">
    <property type="entry name" value="INSLNLIKEGF1"/>
</dbReference>
<dbReference type="PRINTS" id="PR00276">
    <property type="entry name" value="INSULINFAMLY"/>
</dbReference>
<dbReference type="SMART" id="SM00078">
    <property type="entry name" value="IlGF"/>
    <property type="match status" value="1"/>
</dbReference>
<dbReference type="SUPFAM" id="SSF56994">
    <property type="entry name" value="Insulin-like"/>
    <property type="match status" value="1"/>
</dbReference>
<dbReference type="PROSITE" id="PS00262">
    <property type="entry name" value="INSULIN"/>
    <property type="match status" value="1"/>
</dbReference>
<evidence type="ECO:0000250" key="1">
    <source>
        <dbReference type="UniProtKB" id="P05019"/>
    </source>
</evidence>
<evidence type="ECO:0000250" key="2">
    <source>
        <dbReference type="UniProtKB" id="P08069"/>
    </source>
</evidence>
<evidence type="ECO:0000256" key="3">
    <source>
        <dbReference type="SAM" id="MobiDB-lite"/>
    </source>
</evidence>
<evidence type="ECO:0000269" key="4">
    <source>
    </source>
</evidence>
<evidence type="ECO:0000269" key="5">
    <source>
    </source>
</evidence>
<evidence type="ECO:0000269" key="6">
    <source>
    </source>
</evidence>
<evidence type="ECO:0000269" key="7">
    <source>
    </source>
</evidence>
<evidence type="ECO:0000303" key="8">
    <source>
    </source>
</evidence>
<evidence type="ECO:0000305" key="9"/>
<organism>
    <name type="scientific">Xenopus laevis</name>
    <name type="common">African clawed frog</name>
    <dbReference type="NCBI Taxonomy" id="8355"/>
    <lineage>
        <taxon>Eukaryota</taxon>
        <taxon>Metazoa</taxon>
        <taxon>Chordata</taxon>
        <taxon>Craniata</taxon>
        <taxon>Vertebrata</taxon>
        <taxon>Euteleostomi</taxon>
        <taxon>Amphibia</taxon>
        <taxon>Batrachia</taxon>
        <taxon>Anura</taxon>
        <taxon>Pipoidea</taxon>
        <taxon>Pipidae</taxon>
        <taxon>Xenopodinae</taxon>
        <taxon>Xenopus</taxon>
        <taxon>Xenopus</taxon>
    </lineage>
</organism>
<feature type="signal peptide">
    <location>
        <begin position="1"/>
        <end status="unknown"/>
    </location>
</feature>
<feature type="propeptide" id="PRO_0000015708">
    <location>
        <begin status="unknown"/>
        <end position="48"/>
    </location>
</feature>
<feature type="chain" id="PRO_0000015709" description="Insulin-like growth factor 1.S">
    <location>
        <begin position="49"/>
        <end position="118"/>
    </location>
</feature>
<feature type="propeptide" id="PRO_0000015710" description="E peptide">
    <location>
        <begin position="119"/>
        <end position="153"/>
    </location>
</feature>
<feature type="region of interest" description="B">
    <location>
        <begin position="49"/>
        <end position="77"/>
    </location>
</feature>
<feature type="region of interest" description="C">
    <location>
        <begin position="78"/>
        <end position="89"/>
    </location>
</feature>
<feature type="region of interest" description="A">
    <location>
        <begin position="90"/>
        <end position="110"/>
    </location>
</feature>
<feature type="region of interest" description="D">
    <location>
        <begin position="111"/>
        <end position="118"/>
    </location>
</feature>
<feature type="region of interest" description="Disordered" evidence="3">
    <location>
        <begin position="119"/>
        <end position="153"/>
    </location>
</feature>
<feature type="compositionally biased region" description="Basic and acidic residues" evidence="3">
    <location>
        <begin position="125"/>
        <end position="138"/>
    </location>
</feature>
<feature type="compositionally biased region" description="Polar residues" evidence="3">
    <location>
        <begin position="139"/>
        <end position="153"/>
    </location>
</feature>
<feature type="disulfide bond" evidence="2">
    <location>
        <begin position="29"/>
        <end position="38"/>
    </location>
</feature>
<feature type="disulfide bond" evidence="2">
    <location>
        <begin position="54"/>
        <end position="96"/>
    </location>
</feature>
<feature type="disulfide bond" evidence="2">
    <location>
        <begin position="66"/>
        <end position="109"/>
    </location>
</feature>
<feature type="disulfide bond" evidence="2">
    <location>
        <begin position="100"/>
        <end position="109"/>
    </location>
</feature>
<feature type="sequence conflict" description="In Ref. 1; AAA70330." evidence="9" ref="1">
    <original>Q</original>
    <variation>P</variation>
    <location>
        <position position="114"/>
    </location>
</feature>
<feature type="sequence conflict" description="In Ref. 1; AAA70330." evidence="9" ref="1">
    <original>T</original>
    <variation>A</variation>
    <location>
        <position position="123"/>
    </location>
</feature>
<comment type="function">
    <text evidence="1 4 5">The insulin-like growth factors, isolated from plasma, are structurally and functionally related to insulin but have a much higher growth-promoting activity. Promotes head development by inhibiting Wnt signaling during embryogenesis (PubMed:11709186, PubMed:11944947). Acts as a ligand for IGF1R. Binds to the alpha subunit of IGF1R, leading to the activation of the intrinsic tyrosine kinase activity which autophosphorylates tyrosine residues in the beta subunit thus initiatiating a cascade of down-stream signaling events leading to activation of the PI3K-AKT/PKB and the Ras-MAPK pathways. Binds to integrins. Its binding to integrins and subsequent ternary complex formation with integrins and IGFR1 are essential for IGF1 signaling (By similarity).</text>
</comment>
<comment type="subcellular location">
    <subcellularLocation>
        <location>Secreted</location>
    </subcellularLocation>
</comment>
<comment type="tissue specificity">
    <text evidence="6 7">Expressed in adult liver, lung, heart, kidney and peritoneal fat.</text>
</comment>
<comment type="developmental stage">
    <text evidence="4 5">Expressed both maternally and zygotically after the mid-blastula transition. Present both dorsally and ventrally at the beginning of neurulation. Expression is restricted to the developing heart at the tailbud stage.</text>
</comment>
<comment type="similarity">
    <text evidence="9">Belongs to the insulin family.</text>
</comment>
<proteinExistence type="evidence at transcript level"/>
<keyword id="KW-0217">Developmental protein</keyword>
<keyword id="KW-1015">Disulfide bond</keyword>
<keyword id="KW-0339">Growth factor</keyword>
<keyword id="KW-1185">Reference proteome</keyword>
<keyword id="KW-0964">Secreted</keyword>
<keyword id="KW-0732">Signal</keyword>